<gene>
    <name type="primary">paf1</name>
    <name type="synonym">paf1l</name>
</gene>
<evidence type="ECO:0000250" key="1"/>
<evidence type="ECO:0000250" key="2">
    <source>
        <dbReference type="UniProtKB" id="Q8K2T8"/>
    </source>
</evidence>
<evidence type="ECO:0000250" key="3">
    <source>
        <dbReference type="UniProtKB" id="Q8N7H5"/>
    </source>
</evidence>
<evidence type="ECO:0000255" key="4"/>
<evidence type="ECO:0000256" key="5">
    <source>
        <dbReference type="SAM" id="MobiDB-lite"/>
    </source>
</evidence>
<evidence type="ECO:0000269" key="6">
    <source>
    </source>
</evidence>
<evidence type="ECO:0000305" key="7"/>
<accession>Q4U0S5</accession>
<proteinExistence type="evidence at protein level"/>
<organism>
    <name type="scientific">Danio rerio</name>
    <name type="common">Zebrafish</name>
    <name type="synonym">Brachydanio rerio</name>
    <dbReference type="NCBI Taxonomy" id="7955"/>
    <lineage>
        <taxon>Eukaryota</taxon>
        <taxon>Metazoa</taxon>
        <taxon>Chordata</taxon>
        <taxon>Craniata</taxon>
        <taxon>Vertebrata</taxon>
        <taxon>Euteleostomi</taxon>
        <taxon>Actinopterygii</taxon>
        <taxon>Neopterygii</taxon>
        <taxon>Teleostei</taxon>
        <taxon>Ostariophysi</taxon>
        <taxon>Cypriniformes</taxon>
        <taxon>Danionidae</taxon>
        <taxon>Danioninae</taxon>
        <taxon>Danio</taxon>
    </lineage>
</organism>
<comment type="function">
    <text evidence="1 6">Component of the PAF1 complex (PAF1C) which has multiple functions during transcription by RNA polymerase II. PAF1C associates with RNA polymerase II, is involved in transcriptional elongation and in histone modifications including methylation on histone H3 'Lys-4' (H3K4me3) (By similarity). PAF1C seems to be required for multiple steps in cardiac formation. Involved in the migration of myocardial precursors to the midline and the differentiation of the atrioventricular boundary in the developing heart.</text>
</comment>
<comment type="subunit">
    <text evidence="2 3 6">Component of the PAF1 complex, which at least consists of cdc73, paf1, leo1, ctr9 and rtf1 (By similarity). The PAF1 complex interacts with PHF5A (By similarity). Interacts with ctr9 (PubMed:21338598).</text>
</comment>
<comment type="subcellular location">
    <subcellularLocation>
        <location evidence="6">Nucleus</location>
    </subcellularLocation>
</comment>
<comment type="similarity">
    <text evidence="7">Belongs to the PAF1 family.</text>
</comment>
<sequence length="503" mass="58216">MAPTIQTQAQREDGHRSSAHRTVPERSGVVCRVKYGNSLPDIPFDPKFITYPFDQHRFVQYKATSLEKQHKHELLTEPDLGVTIDLINPDTYRIDPNILLDPADEKLLEEEIQAPSSSKRSQQHAKVVPWMRKTEYISTEFNRYGVSNEKVEVKIGVSVKQQFTEEEIYKDRDSQIAAIEKTFEDAQKSISQHYSKPRVTPVEVLPVFPDFKMWINPCAQVIFDSDPAPKDVSAPAGVDMMSQAMIRGMMDEEGNQFVAYFLPNEDTMRKRKRDVEEELDYMPEEVYEYKIAREYNWNVKNKASKGYEENYFFIFRDADGVYYNELETRVRLSKRRAKVGAQSSTNAVLVCKHRDMNEKELEAQEARKAQLENHEPEDEEEELDLEKDMQEDSGEEREKPSDSENSESESEREEEERPADEDEEEEEDEESVKRRRERKSSGSESGDDRQARDEEEIFGSDDDSEEEEEEEEEGGARRRSNSSSVQHSASERASDSSDASDSD</sequence>
<protein>
    <recommendedName>
        <fullName>RNA polymerase II-associated factor 1 homolog</fullName>
    </recommendedName>
    <alternativeName>
        <fullName>PD2-like protein</fullName>
    </alternativeName>
</protein>
<reference key="1">
    <citation type="submission" date="2005-04" db="EMBL/GenBank/DDBJ databases">
        <title>Danio rerio PD2-like mRNA.</title>
        <authorList>
            <person name="Amsterdam A."/>
            <person name="Hopkins N."/>
        </authorList>
    </citation>
    <scope>NUCLEOTIDE SEQUENCE [MRNA]</scope>
</reference>
<reference key="2">
    <citation type="submission" date="2007-04" db="EMBL/GenBank/DDBJ databases">
        <authorList>
            <consortium name="NIH - Zebrafish Gene Collection (ZGC) project"/>
        </authorList>
    </citation>
    <scope>NUCLEOTIDE SEQUENCE [LARGE SCALE MRNA]</scope>
    <source>
        <tissue>Embryo</tissue>
    </source>
</reference>
<reference key="3">
    <citation type="journal article" date="2011" name="Dev. Biol.">
        <title>The PAF1 complex differentially regulates cardiomyocyte specification.</title>
        <authorList>
            <person name="Langenbacher A.D."/>
            <person name="Nguyen C.T."/>
            <person name="Cavanaugh A.M."/>
            <person name="Huang J."/>
            <person name="Lu F."/>
            <person name="Chen J.N."/>
        </authorList>
    </citation>
    <scope>FUNCTION</scope>
    <scope>SUBCELLULAR LOCATION</scope>
    <scope>INTERACTION WITH CTR9</scope>
</reference>
<feature type="chain" id="PRO_0000326404" description="RNA polymerase II-associated factor 1 homolog">
    <location>
        <begin position="1"/>
        <end position="503"/>
    </location>
</feature>
<feature type="region of interest" description="Disordered" evidence="5">
    <location>
        <begin position="1"/>
        <end position="23"/>
    </location>
</feature>
<feature type="region of interest" description="Disordered" evidence="5">
    <location>
        <begin position="360"/>
        <end position="503"/>
    </location>
</feature>
<feature type="coiled-coil region" evidence="4">
    <location>
        <begin position="352"/>
        <end position="381"/>
    </location>
</feature>
<feature type="compositionally biased region" description="Basic and acidic residues" evidence="5">
    <location>
        <begin position="360"/>
        <end position="374"/>
    </location>
</feature>
<feature type="compositionally biased region" description="Acidic residues" evidence="5">
    <location>
        <begin position="375"/>
        <end position="385"/>
    </location>
</feature>
<feature type="compositionally biased region" description="Basic and acidic residues" evidence="5">
    <location>
        <begin position="386"/>
        <end position="402"/>
    </location>
</feature>
<feature type="compositionally biased region" description="Acidic residues" evidence="5">
    <location>
        <begin position="404"/>
        <end position="430"/>
    </location>
</feature>
<feature type="compositionally biased region" description="Acidic residues" evidence="5">
    <location>
        <begin position="453"/>
        <end position="473"/>
    </location>
</feature>
<name>PAF1_DANRE</name>
<dbReference type="EMBL" id="DQ022213">
    <property type="protein sequence ID" value="AAY44602.1"/>
    <property type="molecule type" value="mRNA"/>
</dbReference>
<dbReference type="EMBL" id="BC139613">
    <property type="protein sequence ID" value="AAI39614.1"/>
    <property type="molecule type" value="mRNA"/>
</dbReference>
<dbReference type="RefSeq" id="NP_001019624.1">
    <property type="nucleotide sequence ID" value="NM_001024453.1"/>
</dbReference>
<dbReference type="SMR" id="Q4U0S5"/>
<dbReference type="FunCoup" id="Q4U0S5">
    <property type="interactions" value="2497"/>
</dbReference>
<dbReference type="IntAct" id="Q4U0S5">
    <property type="interactions" value="1"/>
</dbReference>
<dbReference type="STRING" id="7955.ENSDARP00000132235"/>
<dbReference type="PaxDb" id="7955-ENSDARP00000064443"/>
<dbReference type="GeneID" id="553020"/>
<dbReference type="KEGG" id="dre:553020"/>
<dbReference type="AGR" id="ZFIN:ZDB-GENE-050506-101"/>
<dbReference type="CTD" id="54623"/>
<dbReference type="ZFIN" id="ZDB-GENE-050506-101">
    <property type="gene designation" value="paf1"/>
</dbReference>
<dbReference type="eggNOG" id="KOG2478">
    <property type="taxonomic scope" value="Eukaryota"/>
</dbReference>
<dbReference type="InParanoid" id="Q4U0S5"/>
<dbReference type="OrthoDB" id="10260285at2759"/>
<dbReference type="PhylomeDB" id="Q4U0S5"/>
<dbReference type="PRO" id="PR:Q4U0S5"/>
<dbReference type="Proteomes" id="UP000000437">
    <property type="component" value="Chromosome 15"/>
</dbReference>
<dbReference type="GO" id="GO:0016593">
    <property type="term" value="C:Cdc73/Paf1 complex"/>
    <property type="evidence" value="ECO:0000314"/>
    <property type="project" value="ZFIN"/>
</dbReference>
<dbReference type="GO" id="GO:0005634">
    <property type="term" value="C:nucleus"/>
    <property type="evidence" value="ECO:0000314"/>
    <property type="project" value="ZFIN"/>
</dbReference>
<dbReference type="GO" id="GO:0003682">
    <property type="term" value="F:chromatin binding"/>
    <property type="evidence" value="ECO:0000318"/>
    <property type="project" value="GO_Central"/>
</dbReference>
<dbReference type="GO" id="GO:0000993">
    <property type="term" value="F:RNA polymerase II complex binding"/>
    <property type="evidence" value="ECO:0000250"/>
    <property type="project" value="UniProtKB"/>
</dbReference>
<dbReference type="GO" id="GO:0007507">
    <property type="term" value="P:heart development"/>
    <property type="evidence" value="ECO:0000315"/>
    <property type="project" value="UniProtKB"/>
</dbReference>
<dbReference type="GO" id="GO:0000122">
    <property type="term" value="P:negative regulation of transcription by RNA polymerase II"/>
    <property type="evidence" value="ECO:0000250"/>
    <property type="project" value="UniProtKB"/>
</dbReference>
<dbReference type="GO" id="GO:0014032">
    <property type="term" value="P:neural crest cell development"/>
    <property type="evidence" value="ECO:0000315"/>
    <property type="project" value="ZFIN"/>
</dbReference>
<dbReference type="GO" id="GO:0006368">
    <property type="term" value="P:transcription elongation by RNA polymerase II"/>
    <property type="evidence" value="ECO:0000250"/>
    <property type="project" value="UniProtKB"/>
</dbReference>
<dbReference type="InterPro" id="IPR007133">
    <property type="entry name" value="RNA_pol_II-assoc_Paf1"/>
</dbReference>
<dbReference type="PANTHER" id="PTHR23188">
    <property type="entry name" value="RNA POLYMERASE II-ASSOCIATED FACTOR 1 HOMOLOG"/>
    <property type="match status" value="1"/>
</dbReference>
<dbReference type="PANTHER" id="PTHR23188:SF12">
    <property type="entry name" value="RNA POLYMERASE II-ASSOCIATED FACTOR 1 HOMOLOG"/>
    <property type="match status" value="1"/>
</dbReference>
<dbReference type="Pfam" id="PF03985">
    <property type="entry name" value="Paf1"/>
    <property type="match status" value="1"/>
</dbReference>
<keyword id="KW-0175">Coiled coil</keyword>
<keyword id="KW-0539">Nucleus</keyword>
<keyword id="KW-1185">Reference proteome</keyword>
<keyword id="KW-0804">Transcription</keyword>
<keyword id="KW-0805">Transcription regulation</keyword>